<gene>
    <name evidence="1" type="primary">ybeY</name>
    <name type="ordered locus">ECP_0682</name>
</gene>
<feature type="chain" id="PRO_0000284206" description="Endoribonuclease YbeY">
    <location>
        <begin position="1"/>
        <end position="155"/>
    </location>
</feature>
<feature type="binding site" evidence="1">
    <location>
        <position position="114"/>
    </location>
    <ligand>
        <name>Zn(2+)</name>
        <dbReference type="ChEBI" id="CHEBI:29105"/>
        <note>catalytic</note>
    </ligand>
</feature>
<feature type="binding site" evidence="1">
    <location>
        <position position="118"/>
    </location>
    <ligand>
        <name>Zn(2+)</name>
        <dbReference type="ChEBI" id="CHEBI:29105"/>
        <note>catalytic</note>
    </ligand>
</feature>
<feature type="binding site" evidence="1">
    <location>
        <position position="124"/>
    </location>
    <ligand>
        <name>Zn(2+)</name>
        <dbReference type="ChEBI" id="CHEBI:29105"/>
        <note>catalytic</note>
    </ligand>
</feature>
<organism>
    <name type="scientific">Escherichia coli O6:K15:H31 (strain 536 / UPEC)</name>
    <dbReference type="NCBI Taxonomy" id="362663"/>
    <lineage>
        <taxon>Bacteria</taxon>
        <taxon>Pseudomonadati</taxon>
        <taxon>Pseudomonadota</taxon>
        <taxon>Gammaproteobacteria</taxon>
        <taxon>Enterobacterales</taxon>
        <taxon>Enterobacteriaceae</taxon>
        <taxon>Escherichia</taxon>
    </lineage>
</organism>
<protein>
    <recommendedName>
        <fullName evidence="1">Endoribonuclease YbeY</fullName>
        <ecNumber evidence="1">3.1.-.-</ecNumber>
    </recommendedName>
</protein>
<reference key="1">
    <citation type="journal article" date="2006" name="Mol. Microbiol.">
        <title>Role of pathogenicity island-associated integrases in the genome plasticity of uropathogenic Escherichia coli strain 536.</title>
        <authorList>
            <person name="Hochhut B."/>
            <person name="Wilde C."/>
            <person name="Balling G."/>
            <person name="Middendorf B."/>
            <person name="Dobrindt U."/>
            <person name="Brzuszkiewicz E."/>
            <person name="Gottschalk G."/>
            <person name="Carniel E."/>
            <person name="Hacker J."/>
        </authorList>
    </citation>
    <scope>NUCLEOTIDE SEQUENCE [LARGE SCALE GENOMIC DNA]</scope>
    <source>
        <strain>536 / UPEC</strain>
    </source>
</reference>
<evidence type="ECO:0000255" key="1">
    <source>
        <dbReference type="HAMAP-Rule" id="MF_00009"/>
    </source>
</evidence>
<proteinExistence type="inferred from homology"/>
<keyword id="KW-0963">Cytoplasm</keyword>
<keyword id="KW-0255">Endonuclease</keyword>
<keyword id="KW-0378">Hydrolase</keyword>
<keyword id="KW-0479">Metal-binding</keyword>
<keyword id="KW-0540">Nuclease</keyword>
<keyword id="KW-0690">Ribosome biogenesis</keyword>
<keyword id="KW-0698">rRNA processing</keyword>
<keyword id="KW-0862">Zinc</keyword>
<dbReference type="EC" id="3.1.-.-" evidence="1"/>
<dbReference type="EMBL" id="CP000247">
    <property type="protein sequence ID" value="ABG68710.1"/>
    <property type="molecule type" value="Genomic_DNA"/>
</dbReference>
<dbReference type="RefSeq" id="WP_000084467.1">
    <property type="nucleotide sequence ID" value="NC_008253.1"/>
</dbReference>
<dbReference type="SMR" id="Q0TK21"/>
<dbReference type="KEGG" id="ecp:ECP_0682"/>
<dbReference type="HOGENOM" id="CLU_106710_0_1_6"/>
<dbReference type="Proteomes" id="UP000009182">
    <property type="component" value="Chromosome"/>
</dbReference>
<dbReference type="GO" id="GO:0005737">
    <property type="term" value="C:cytoplasm"/>
    <property type="evidence" value="ECO:0007669"/>
    <property type="project" value="UniProtKB-SubCell"/>
</dbReference>
<dbReference type="GO" id="GO:0004222">
    <property type="term" value="F:metalloendopeptidase activity"/>
    <property type="evidence" value="ECO:0007669"/>
    <property type="project" value="InterPro"/>
</dbReference>
<dbReference type="GO" id="GO:0004521">
    <property type="term" value="F:RNA endonuclease activity"/>
    <property type="evidence" value="ECO:0007669"/>
    <property type="project" value="UniProtKB-UniRule"/>
</dbReference>
<dbReference type="GO" id="GO:0008270">
    <property type="term" value="F:zinc ion binding"/>
    <property type="evidence" value="ECO:0007669"/>
    <property type="project" value="UniProtKB-UniRule"/>
</dbReference>
<dbReference type="GO" id="GO:0006364">
    <property type="term" value="P:rRNA processing"/>
    <property type="evidence" value="ECO:0007669"/>
    <property type="project" value="UniProtKB-UniRule"/>
</dbReference>
<dbReference type="FunFam" id="3.40.390.30:FF:000001">
    <property type="entry name" value="Endoribonuclease YbeY"/>
    <property type="match status" value="1"/>
</dbReference>
<dbReference type="Gene3D" id="3.40.390.30">
    <property type="entry name" value="Metalloproteases ('zincins'), catalytic domain"/>
    <property type="match status" value="1"/>
</dbReference>
<dbReference type="HAMAP" id="MF_00009">
    <property type="entry name" value="Endoribonucl_YbeY"/>
    <property type="match status" value="1"/>
</dbReference>
<dbReference type="InterPro" id="IPR023091">
    <property type="entry name" value="MetalPrtase_cat_dom_sf_prd"/>
</dbReference>
<dbReference type="InterPro" id="IPR002036">
    <property type="entry name" value="YbeY"/>
</dbReference>
<dbReference type="InterPro" id="IPR020549">
    <property type="entry name" value="YbeY_CS"/>
</dbReference>
<dbReference type="NCBIfam" id="TIGR00043">
    <property type="entry name" value="rRNA maturation RNase YbeY"/>
    <property type="match status" value="1"/>
</dbReference>
<dbReference type="PANTHER" id="PTHR46986">
    <property type="entry name" value="ENDORIBONUCLEASE YBEY, CHLOROPLASTIC"/>
    <property type="match status" value="1"/>
</dbReference>
<dbReference type="PANTHER" id="PTHR46986:SF1">
    <property type="entry name" value="ENDORIBONUCLEASE YBEY, CHLOROPLASTIC"/>
    <property type="match status" value="1"/>
</dbReference>
<dbReference type="Pfam" id="PF02130">
    <property type="entry name" value="YbeY"/>
    <property type="match status" value="1"/>
</dbReference>
<dbReference type="SUPFAM" id="SSF55486">
    <property type="entry name" value="Metalloproteases ('zincins'), catalytic domain"/>
    <property type="match status" value="1"/>
</dbReference>
<dbReference type="PROSITE" id="PS01306">
    <property type="entry name" value="UPF0054"/>
    <property type="match status" value="1"/>
</dbReference>
<comment type="function">
    <text evidence="1">Single strand-specific metallo-endoribonuclease involved in late-stage 70S ribosome quality control and in maturation of the 3' terminus of the 16S rRNA.</text>
</comment>
<comment type="cofactor">
    <cofactor evidence="1">
        <name>Zn(2+)</name>
        <dbReference type="ChEBI" id="CHEBI:29105"/>
    </cofactor>
    <text evidence="1">Binds 1 zinc ion.</text>
</comment>
<comment type="subcellular location">
    <subcellularLocation>
        <location evidence="1">Cytoplasm</location>
    </subcellularLocation>
</comment>
<comment type="similarity">
    <text evidence="1">Belongs to the endoribonuclease YbeY family.</text>
</comment>
<name>YBEY_ECOL5</name>
<accession>Q0TK21</accession>
<sequence length="155" mass="17526">MSQVILDLQLACEDNSGLPEESQFQTWLNAVIPQFQEESEVTIRVVDTAESHSLNLTYRGKDKPTNVLSFPFEVPPGMEMSLLGDLVICRQVVEKEAQEQGKPLEAHWAHMVVHGSLHLLGYDHIEDDEAEEMEAIETEIMLALGYEDPYIAEKE</sequence>